<reference key="1">
    <citation type="journal article" date="1994" name="Proc. Natl. Acad. Sci. U.S.A.">
        <title>AFC1, a LAMMER kinase from Arabidopsis thaliana, activates STE12-dependent processes in yeast.</title>
        <authorList>
            <person name="Bender J."/>
            <person name="Fink G.R."/>
        </authorList>
    </citation>
    <scope>NUCLEOTIDE SEQUENCE [MRNA]</scope>
    <source>
        <strain>cv. Landsberg erecta</strain>
    </source>
</reference>
<reference key="2">
    <citation type="submission" date="1995-01" db="EMBL/GenBank/DDBJ databases">
        <title>A.thaliana genes encoding protein kinases of a new family.</title>
        <authorList>
            <person name="Kuromori T."/>
            <person name="Yamamoto M."/>
        </authorList>
    </citation>
    <scope>NUCLEOTIDE SEQUENCE [MRNA]</scope>
</reference>
<reference key="3">
    <citation type="journal article" date="2000" name="Nature">
        <title>Sequence and analysis of chromosome 3 of the plant Arabidopsis thaliana.</title>
        <authorList>
            <person name="Salanoubat M."/>
            <person name="Lemcke K."/>
            <person name="Rieger M."/>
            <person name="Ansorge W."/>
            <person name="Unseld M."/>
            <person name="Fartmann B."/>
            <person name="Valle G."/>
            <person name="Bloecker H."/>
            <person name="Perez-Alonso M."/>
            <person name="Obermaier B."/>
            <person name="Delseny M."/>
            <person name="Boutry M."/>
            <person name="Grivell L.A."/>
            <person name="Mache R."/>
            <person name="Puigdomenech P."/>
            <person name="De Simone V."/>
            <person name="Choisne N."/>
            <person name="Artiguenave F."/>
            <person name="Robert C."/>
            <person name="Brottier P."/>
            <person name="Wincker P."/>
            <person name="Cattolico L."/>
            <person name="Weissenbach J."/>
            <person name="Saurin W."/>
            <person name="Quetier F."/>
            <person name="Schaefer M."/>
            <person name="Mueller-Auer S."/>
            <person name="Gabel C."/>
            <person name="Fuchs M."/>
            <person name="Benes V."/>
            <person name="Wurmbach E."/>
            <person name="Drzonek H."/>
            <person name="Erfle H."/>
            <person name="Jordan N."/>
            <person name="Bangert S."/>
            <person name="Wiedelmann R."/>
            <person name="Kranz H."/>
            <person name="Voss H."/>
            <person name="Holland R."/>
            <person name="Brandt P."/>
            <person name="Nyakatura G."/>
            <person name="Vezzi A."/>
            <person name="D'Angelo M."/>
            <person name="Pallavicini A."/>
            <person name="Toppo S."/>
            <person name="Simionati B."/>
            <person name="Conrad A."/>
            <person name="Hornischer K."/>
            <person name="Kauer G."/>
            <person name="Loehnert T.-H."/>
            <person name="Nordsiek G."/>
            <person name="Reichelt J."/>
            <person name="Scharfe M."/>
            <person name="Schoen O."/>
            <person name="Bargues M."/>
            <person name="Terol J."/>
            <person name="Climent J."/>
            <person name="Navarro P."/>
            <person name="Collado C."/>
            <person name="Perez-Perez A."/>
            <person name="Ottenwaelder B."/>
            <person name="Duchemin D."/>
            <person name="Cooke R."/>
            <person name="Laudie M."/>
            <person name="Berger-Llauro C."/>
            <person name="Purnelle B."/>
            <person name="Masuy D."/>
            <person name="de Haan M."/>
            <person name="Maarse A.C."/>
            <person name="Alcaraz J.-P."/>
            <person name="Cottet A."/>
            <person name="Casacuberta E."/>
            <person name="Monfort A."/>
            <person name="Argiriou A."/>
            <person name="Flores M."/>
            <person name="Liguori R."/>
            <person name="Vitale D."/>
            <person name="Mannhaupt G."/>
            <person name="Haase D."/>
            <person name="Schoof H."/>
            <person name="Rudd S."/>
            <person name="Zaccaria P."/>
            <person name="Mewes H.-W."/>
            <person name="Mayer K.F.X."/>
            <person name="Kaul S."/>
            <person name="Town C.D."/>
            <person name="Koo H.L."/>
            <person name="Tallon L.J."/>
            <person name="Jenkins J."/>
            <person name="Rooney T."/>
            <person name="Rizzo M."/>
            <person name="Walts A."/>
            <person name="Utterback T."/>
            <person name="Fujii C.Y."/>
            <person name="Shea T.P."/>
            <person name="Creasy T.H."/>
            <person name="Haas B."/>
            <person name="Maiti R."/>
            <person name="Wu D."/>
            <person name="Peterson J."/>
            <person name="Van Aken S."/>
            <person name="Pai G."/>
            <person name="Militscher J."/>
            <person name="Sellers P."/>
            <person name="Gill J.E."/>
            <person name="Feldblyum T.V."/>
            <person name="Preuss D."/>
            <person name="Lin X."/>
            <person name="Nierman W.C."/>
            <person name="Salzberg S.L."/>
            <person name="White O."/>
            <person name="Venter J.C."/>
            <person name="Fraser C.M."/>
            <person name="Kaneko T."/>
            <person name="Nakamura Y."/>
            <person name="Sato S."/>
            <person name="Kato T."/>
            <person name="Asamizu E."/>
            <person name="Sasamoto S."/>
            <person name="Kimura T."/>
            <person name="Idesawa K."/>
            <person name="Kawashima K."/>
            <person name="Kishida Y."/>
            <person name="Kiyokawa C."/>
            <person name="Kohara M."/>
            <person name="Matsumoto M."/>
            <person name="Matsuno A."/>
            <person name="Muraki A."/>
            <person name="Nakayama S."/>
            <person name="Nakazaki N."/>
            <person name="Shinpo S."/>
            <person name="Takeuchi C."/>
            <person name="Wada T."/>
            <person name="Watanabe A."/>
            <person name="Yamada M."/>
            <person name="Yasuda M."/>
            <person name="Tabata S."/>
        </authorList>
    </citation>
    <scope>NUCLEOTIDE SEQUENCE [LARGE SCALE GENOMIC DNA]</scope>
    <source>
        <strain>cv. Columbia</strain>
    </source>
</reference>
<reference key="4">
    <citation type="journal article" date="2017" name="Plant J.">
        <title>Araport11: a complete reannotation of the Arabidopsis thaliana reference genome.</title>
        <authorList>
            <person name="Cheng C.Y."/>
            <person name="Krishnakumar V."/>
            <person name="Chan A.P."/>
            <person name="Thibaud-Nissen F."/>
            <person name="Schobel S."/>
            <person name="Town C.D."/>
        </authorList>
    </citation>
    <scope>GENOME REANNOTATION</scope>
    <source>
        <strain>cv. Columbia</strain>
    </source>
</reference>
<dbReference type="EC" id="2.7.12.1"/>
<dbReference type="EMBL" id="U16176">
    <property type="protein sequence ID" value="AAA57117.1"/>
    <property type="molecule type" value="mRNA"/>
</dbReference>
<dbReference type="EMBL" id="D45354">
    <property type="protein sequence ID" value="BAA08215.1"/>
    <property type="molecule type" value="mRNA"/>
</dbReference>
<dbReference type="EMBL" id="AL132966">
    <property type="protein sequence ID" value="CAB67664.1"/>
    <property type="molecule type" value="Genomic_DNA"/>
</dbReference>
<dbReference type="EMBL" id="CP002686">
    <property type="protein sequence ID" value="AEE79110.1"/>
    <property type="molecule type" value="Genomic_DNA"/>
</dbReference>
<dbReference type="EMBL" id="CP002686">
    <property type="protein sequence ID" value="AEE79111.1"/>
    <property type="molecule type" value="Genomic_DNA"/>
</dbReference>
<dbReference type="EMBL" id="CP002686">
    <property type="protein sequence ID" value="AEE79112.1"/>
    <property type="molecule type" value="Genomic_DNA"/>
</dbReference>
<dbReference type="PIR" id="S71169">
    <property type="entry name" value="S71169"/>
</dbReference>
<dbReference type="RefSeq" id="NP_001030853.1">
    <molecule id="P51566-1"/>
    <property type="nucleotide sequence ID" value="NM_001035776.1"/>
</dbReference>
<dbReference type="RefSeq" id="NP_190925.1">
    <molecule id="P51566-1"/>
    <property type="nucleotide sequence ID" value="NM_115217.3"/>
</dbReference>
<dbReference type="RefSeq" id="NP_850695.2">
    <molecule id="P51566-1"/>
    <property type="nucleotide sequence ID" value="NM_180364.4"/>
</dbReference>
<dbReference type="SMR" id="P51566"/>
<dbReference type="BioGRID" id="9842">
    <property type="interactions" value="1"/>
</dbReference>
<dbReference type="FunCoup" id="P51566">
    <property type="interactions" value="3497"/>
</dbReference>
<dbReference type="IntAct" id="P51566">
    <property type="interactions" value="1"/>
</dbReference>
<dbReference type="STRING" id="3702.P51566"/>
<dbReference type="PaxDb" id="3702-AT3G53570.1"/>
<dbReference type="ProteomicsDB" id="244779">
    <molecule id="P51566-1"/>
</dbReference>
<dbReference type="EnsemblPlants" id="AT3G53570.1">
    <molecule id="P51566-1"/>
    <property type="protein sequence ID" value="AT3G53570.1"/>
    <property type="gene ID" value="AT3G53570"/>
</dbReference>
<dbReference type="EnsemblPlants" id="AT3G53570.2">
    <molecule id="P51566-1"/>
    <property type="protein sequence ID" value="AT3G53570.2"/>
    <property type="gene ID" value="AT3G53570"/>
</dbReference>
<dbReference type="EnsemblPlants" id="AT3G53570.4">
    <molecule id="P51566-1"/>
    <property type="protein sequence ID" value="AT3G53570.4"/>
    <property type="gene ID" value="AT3G53570"/>
</dbReference>
<dbReference type="GeneID" id="824525"/>
<dbReference type="Gramene" id="AT3G53570.1">
    <molecule id="P51566-1"/>
    <property type="protein sequence ID" value="AT3G53570.1"/>
    <property type="gene ID" value="AT3G53570"/>
</dbReference>
<dbReference type="Gramene" id="AT3G53570.2">
    <molecule id="P51566-1"/>
    <property type="protein sequence ID" value="AT3G53570.2"/>
    <property type="gene ID" value="AT3G53570"/>
</dbReference>
<dbReference type="Gramene" id="AT3G53570.4">
    <molecule id="P51566-1"/>
    <property type="protein sequence ID" value="AT3G53570.4"/>
    <property type="gene ID" value="AT3G53570"/>
</dbReference>
<dbReference type="KEGG" id="ath:AT3G53570"/>
<dbReference type="Araport" id="AT3G53570"/>
<dbReference type="TAIR" id="AT3G53570">
    <property type="gene designation" value="FC1"/>
</dbReference>
<dbReference type="eggNOG" id="KOG0671">
    <property type="taxonomic scope" value="Eukaryota"/>
</dbReference>
<dbReference type="InParanoid" id="P51566"/>
<dbReference type="PhylomeDB" id="P51566"/>
<dbReference type="BRENDA" id="2.7.12.1">
    <property type="organism ID" value="399"/>
</dbReference>
<dbReference type="PRO" id="PR:P51566"/>
<dbReference type="Proteomes" id="UP000006548">
    <property type="component" value="Chromosome 3"/>
</dbReference>
<dbReference type="ExpressionAtlas" id="P51566">
    <property type="expression patterns" value="baseline and differential"/>
</dbReference>
<dbReference type="GO" id="GO:0005524">
    <property type="term" value="F:ATP binding"/>
    <property type="evidence" value="ECO:0007669"/>
    <property type="project" value="UniProtKB-KW"/>
</dbReference>
<dbReference type="GO" id="GO:0106310">
    <property type="term" value="F:protein serine kinase activity"/>
    <property type="evidence" value="ECO:0007669"/>
    <property type="project" value="RHEA"/>
</dbReference>
<dbReference type="GO" id="GO:0004674">
    <property type="term" value="F:protein serine/threonine kinase activity"/>
    <property type="evidence" value="ECO:0007669"/>
    <property type="project" value="UniProtKB-KW"/>
</dbReference>
<dbReference type="GO" id="GO:0004712">
    <property type="term" value="F:protein serine/threonine/tyrosine kinase activity"/>
    <property type="evidence" value="ECO:0007669"/>
    <property type="project" value="UniProtKB-EC"/>
</dbReference>
<dbReference type="GO" id="GO:0004713">
    <property type="term" value="F:protein tyrosine kinase activity"/>
    <property type="evidence" value="ECO:0007669"/>
    <property type="project" value="RHEA"/>
</dbReference>
<dbReference type="GO" id="GO:0006355">
    <property type="term" value="P:regulation of DNA-templated transcription"/>
    <property type="evidence" value="ECO:0000304"/>
    <property type="project" value="TAIR"/>
</dbReference>
<dbReference type="CDD" id="cd14134">
    <property type="entry name" value="PKc_CLK"/>
    <property type="match status" value="1"/>
</dbReference>
<dbReference type="FunFam" id="1.10.510.10:FF:000612">
    <property type="entry name" value="Serine/threonine-protein kinase AFC2"/>
    <property type="match status" value="1"/>
</dbReference>
<dbReference type="FunFam" id="3.30.200.20:FF:000463">
    <property type="entry name" value="Serine/threonine-protein kinase AFC2"/>
    <property type="match status" value="1"/>
</dbReference>
<dbReference type="Gene3D" id="3.30.200.20">
    <property type="entry name" value="Phosphorylase Kinase, domain 1"/>
    <property type="match status" value="1"/>
</dbReference>
<dbReference type="Gene3D" id="1.10.510.10">
    <property type="entry name" value="Transferase(Phosphotransferase) domain 1"/>
    <property type="match status" value="1"/>
</dbReference>
<dbReference type="InterPro" id="IPR051175">
    <property type="entry name" value="CLK_kinases"/>
</dbReference>
<dbReference type="InterPro" id="IPR011009">
    <property type="entry name" value="Kinase-like_dom_sf"/>
</dbReference>
<dbReference type="InterPro" id="IPR000719">
    <property type="entry name" value="Prot_kinase_dom"/>
</dbReference>
<dbReference type="InterPro" id="IPR008271">
    <property type="entry name" value="Ser/Thr_kinase_AS"/>
</dbReference>
<dbReference type="PANTHER" id="PTHR45646">
    <property type="entry name" value="SERINE/THREONINE-PROTEIN KINASE DOA-RELATED"/>
    <property type="match status" value="1"/>
</dbReference>
<dbReference type="PANTHER" id="PTHR45646:SF12">
    <property type="entry name" value="SERINE_THREONINE-PROTEIN KINASE AFC1"/>
    <property type="match status" value="1"/>
</dbReference>
<dbReference type="Pfam" id="PF00069">
    <property type="entry name" value="Pkinase"/>
    <property type="match status" value="1"/>
</dbReference>
<dbReference type="SMART" id="SM00220">
    <property type="entry name" value="S_TKc"/>
    <property type="match status" value="1"/>
</dbReference>
<dbReference type="SUPFAM" id="SSF56112">
    <property type="entry name" value="Protein kinase-like (PK-like)"/>
    <property type="match status" value="1"/>
</dbReference>
<dbReference type="PROSITE" id="PS50011">
    <property type="entry name" value="PROTEIN_KINASE_DOM"/>
    <property type="match status" value="1"/>
</dbReference>
<dbReference type="PROSITE" id="PS00108">
    <property type="entry name" value="PROTEIN_KINASE_ST"/>
    <property type="match status" value="1"/>
</dbReference>
<accession>P51566</accession>
<accession>Q39184</accession>
<feature type="chain" id="PRO_0000085600" description="Serine/threonine-protein kinase AFC1">
    <location>
        <begin position="1"/>
        <end position="467"/>
    </location>
</feature>
<feature type="domain" description="Protein kinase" evidence="1">
    <location>
        <begin position="115"/>
        <end position="443"/>
    </location>
</feature>
<feature type="region of interest" description="Disordered" evidence="3">
    <location>
        <begin position="447"/>
        <end position="467"/>
    </location>
</feature>
<feature type="active site" description="Proton acceptor" evidence="1 2">
    <location>
        <position position="240"/>
    </location>
</feature>
<feature type="binding site" evidence="1">
    <location>
        <begin position="121"/>
        <end position="129"/>
    </location>
    <ligand>
        <name>ATP</name>
        <dbReference type="ChEBI" id="CHEBI:30616"/>
    </ligand>
</feature>
<feature type="binding site" evidence="1">
    <location>
        <position position="144"/>
    </location>
    <ligand>
        <name>ATP</name>
        <dbReference type="ChEBI" id="CHEBI:30616"/>
    </ligand>
</feature>
<feature type="sequence conflict" description="In Ref. 1; AAA57117." evidence="4" ref="1">
    <original>I</original>
    <variation>M</variation>
    <location>
        <position position="117"/>
    </location>
</feature>
<gene>
    <name type="primary">AFC1</name>
    <name type="synonym">AME2</name>
    <name type="ordered locus">At3g53570</name>
    <name type="ORF">F4P12_270</name>
</gene>
<sequence>MQSSVYRDKASSIAMILETQRNVEFPHRIVDKRPRKRPRLTWDAAPPLLPPPPPPTVFQPPLYYGPEFASGLVPNFVYPNMFYNGLPRQGSPPWRPDDKDGHYVFVVGDTLTPRYQILSKMGEGTFGQVLECFDNKNKEVVAIKVIRSINKYREAAMIEIDVLQRLTRHDVGGSRCVQIRNWFDYRNHICIVFEKLGPSLYDFLRKNSYRSFPIDLVRELGRQLLESVAYMHDLRLIHTDLKPENILLVSSEYIKIPDYKFLSRPTKDGSYFKNLPKSSAIKLIDFGSTTFEHQDHNYIVSTRHYRAPEVILGVGWNYPCDLWSIGCILVELCSGEALFQTHENLEHLAMMERVLGPLPPHMVLRADRRSEKYFRRGAKLDWPEGATSRDSLKAVWKLPRLPNLIMQHVDHSAGDLIDLLQGLLRYDPTERFKAREALNHPFFTRSREQSIPPFNPNPHPFLYNQKN</sequence>
<name>AFC1_ARATH</name>
<organism>
    <name type="scientific">Arabidopsis thaliana</name>
    <name type="common">Mouse-ear cress</name>
    <dbReference type="NCBI Taxonomy" id="3702"/>
    <lineage>
        <taxon>Eukaryota</taxon>
        <taxon>Viridiplantae</taxon>
        <taxon>Streptophyta</taxon>
        <taxon>Embryophyta</taxon>
        <taxon>Tracheophyta</taxon>
        <taxon>Spermatophyta</taxon>
        <taxon>Magnoliopsida</taxon>
        <taxon>eudicotyledons</taxon>
        <taxon>Gunneridae</taxon>
        <taxon>Pentapetalae</taxon>
        <taxon>rosids</taxon>
        <taxon>malvids</taxon>
        <taxon>Brassicales</taxon>
        <taxon>Brassicaceae</taxon>
        <taxon>Camelineae</taxon>
        <taxon>Arabidopsis</taxon>
    </lineage>
</organism>
<evidence type="ECO:0000255" key="1">
    <source>
        <dbReference type="PROSITE-ProRule" id="PRU00159"/>
    </source>
</evidence>
<evidence type="ECO:0000255" key="2">
    <source>
        <dbReference type="PROSITE-ProRule" id="PRU10027"/>
    </source>
</evidence>
<evidence type="ECO:0000256" key="3">
    <source>
        <dbReference type="SAM" id="MobiDB-lite"/>
    </source>
</evidence>
<evidence type="ECO:0000305" key="4"/>
<protein>
    <recommendedName>
        <fullName>Serine/threonine-protein kinase AFC1</fullName>
        <ecNumber>2.7.12.1</ecNumber>
    </recommendedName>
</protein>
<comment type="function">
    <text>Activator of yeast transcription factor, STE12.</text>
</comment>
<comment type="catalytic activity">
    <reaction>
        <text>L-seryl-[protein] + ATP = O-phospho-L-seryl-[protein] + ADP + H(+)</text>
        <dbReference type="Rhea" id="RHEA:17989"/>
        <dbReference type="Rhea" id="RHEA-COMP:9863"/>
        <dbReference type="Rhea" id="RHEA-COMP:11604"/>
        <dbReference type="ChEBI" id="CHEBI:15378"/>
        <dbReference type="ChEBI" id="CHEBI:29999"/>
        <dbReference type="ChEBI" id="CHEBI:30616"/>
        <dbReference type="ChEBI" id="CHEBI:83421"/>
        <dbReference type="ChEBI" id="CHEBI:456216"/>
        <dbReference type="EC" id="2.7.12.1"/>
    </reaction>
</comment>
<comment type="catalytic activity">
    <reaction>
        <text>L-threonyl-[protein] + ATP = O-phospho-L-threonyl-[protein] + ADP + H(+)</text>
        <dbReference type="Rhea" id="RHEA:46608"/>
        <dbReference type="Rhea" id="RHEA-COMP:11060"/>
        <dbReference type="Rhea" id="RHEA-COMP:11605"/>
        <dbReference type="ChEBI" id="CHEBI:15378"/>
        <dbReference type="ChEBI" id="CHEBI:30013"/>
        <dbReference type="ChEBI" id="CHEBI:30616"/>
        <dbReference type="ChEBI" id="CHEBI:61977"/>
        <dbReference type="ChEBI" id="CHEBI:456216"/>
        <dbReference type="EC" id="2.7.12.1"/>
    </reaction>
</comment>
<comment type="catalytic activity">
    <reaction>
        <text>L-tyrosyl-[protein] + ATP = O-phospho-L-tyrosyl-[protein] + ADP + H(+)</text>
        <dbReference type="Rhea" id="RHEA:10596"/>
        <dbReference type="Rhea" id="RHEA-COMP:10136"/>
        <dbReference type="Rhea" id="RHEA-COMP:20101"/>
        <dbReference type="ChEBI" id="CHEBI:15378"/>
        <dbReference type="ChEBI" id="CHEBI:30616"/>
        <dbReference type="ChEBI" id="CHEBI:46858"/>
        <dbReference type="ChEBI" id="CHEBI:61978"/>
        <dbReference type="ChEBI" id="CHEBI:456216"/>
        <dbReference type="EC" id="2.7.12.1"/>
    </reaction>
</comment>
<comment type="alternative products">
    <event type="alternative splicing"/>
    <isoform>
        <id>P51566-1</id>
        <name>1</name>
        <sequence type="displayed"/>
    </isoform>
    <text>A number of isoforms are produced. According to EST sequences.</text>
</comment>
<comment type="similarity">
    <text evidence="4">Belongs to the protein kinase superfamily. CMGC Ser/Thr protein kinase family. Lammer subfamily.</text>
</comment>
<proteinExistence type="evidence at transcript level"/>
<keyword id="KW-0025">Alternative splicing</keyword>
<keyword id="KW-0067">ATP-binding</keyword>
<keyword id="KW-0418">Kinase</keyword>
<keyword id="KW-0547">Nucleotide-binding</keyword>
<keyword id="KW-1185">Reference proteome</keyword>
<keyword id="KW-0723">Serine/threonine-protein kinase</keyword>
<keyword id="KW-0808">Transferase</keyword>